<accession>Q9GV27</accession>
<organism>
    <name type="scientific">Bombyx mori</name>
    <name type="common">Silk moth</name>
    <dbReference type="NCBI Taxonomy" id="7091"/>
    <lineage>
        <taxon>Eukaryota</taxon>
        <taxon>Metazoa</taxon>
        <taxon>Ecdysozoa</taxon>
        <taxon>Arthropoda</taxon>
        <taxon>Hexapoda</taxon>
        <taxon>Insecta</taxon>
        <taxon>Pterygota</taxon>
        <taxon>Neoptera</taxon>
        <taxon>Endopterygota</taxon>
        <taxon>Lepidoptera</taxon>
        <taxon>Glossata</taxon>
        <taxon>Ditrysia</taxon>
        <taxon>Bombycoidea</taxon>
        <taxon>Bombycidae</taxon>
        <taxon>Bombycinae</taxon>
        <taxon>Bombyx</taxon>
    </lineage>
</organism>
<feature type="chain" id="PRO_0000365183" description="Eukaryotic translation initiation factor 3 subunit H">
    <location>
        <begin position="1"/>
        <end position="337"/>
    </location>
</feature>
<feature type="domain" description="MPN" evidence="2">
    <location>
        <begin position="21"/>
        <end position="153"/>
    </location>
</feature>
<reference key="1">
    <citation type="journal article" date="2001" name="Insect Biochem. Mol. Biol.">
        <title>Ecdysteroid-inducible genes in the programmed cell death during insect metamorphosis.</title>
        <authorList>
            <person name="Tsuzuki S."/>
            <person name="Iwami M."/>
            <person name="Sakurai S."/>
        </authorList>
    </citation>
    <scope>NUCLEOTIDE SEQUENCE [MRNA]</scope>
</reference>
<name>EIF3H_BOMMO</name>
<evidence type="ECO:0000255" key="1">
    <source>
        <dbReference type="HAMAP-Rule" id="MF_03007"/>
    </source>
</evidence>
<evidence type="ECO:0000255" key="2">
    <source>
        <dbReference type="PROSITE-ProRule" id="PRU01182"/>
    </source>
</evidence>
<proteinExistence type="evidence at transcript level"/>
<protein>
    <recommendedName>
        <fullName evidence="1">Eukaryotic translation initiation factor 3 subunit H</fullName>
        <shortName evidence="1">eIF3h</shortName>
    </recommendedName>
</protein>
<sequence>MASRAGSARRAPENEATIQYVQCDGLAVMKIVKHCHEESCSNMEVAQGALLGLVVENRLEITNCFPFPKHDDTMDEEEYQLDMMRRLRRVNVDHFHVGWYQSADVGNFLSLSLLESQYHYQTSIEESVVVIYDTKKSARGFLTLKAYRLTPQAIAMYKEGDYTPEALRNLKIGYENLFIEVPIVIRNSPLTNIMISELTEMIPEEEGSKFLDLGTASVLEGQLRSLMERVDELNQEAIKFNRYQQLVVRQQQDKHRWMVKRAQENAARAAKDETPLPEEDVNKLFKPHPVPPRLNPMIVAGQIDTYSQHISQFCSQSLAKLYLTQALQNAKEAKQNN</sequence>
<dbReference type="EMBL" id="AB041635">
    <property type="protein sequence ID" value="BAB16696.1"/>
    <property type="molecule type" value="mRNA"/>
</dbReference>
<dbReference type="RefSeq" id="NP_001036848.1">
    <property type="nucleotide sequence ID" value="NM_001043383.2"/>
</dbReference>
<dbReference type="SMR" id="Q9GV27"/>
<dbReference type="FunCoup" id="Q9GV27">
    <property type="interactions" value="1890"/>
</dbReference>
<dbReference type="STRING" id="7091.Q9GV27"/>
<dbReference type="MEROPS" id="M67.971"/>
<dbReference type="PaxDb" id="7091-BGIBMGA006141-TA"/>
<dbReference type="EnsemblMetazoa" id="NM_001043383.2">
    <property type="protein sequence ID" value="NP_001036848.1"/>
    <property type="gene ID" value="GeneID_692388"/>
</dbReference>
<dbReference type="GeneID" id="692388"/>
<dbReference type="KEGG" id="bmor:692388"/>
<dbReference type="CTD" id="8667"/>
<dbReference type="eggNOG" id="KOG1560">
    <property type="taxonomic scope" value="Eukaryota"/>
</dbReference>
<dbReference type="HOGENOM" id="CLU_044094_0_0_1"/>
<dbReference type="InParanoid" id="Q9GV27"/>
<dbReference type="OMA" id="WYQSTYF"/>
<dbReference type="OrthoDB" id="310835at7088"/>
<dbReference type="Proteomes" id="UP000005204">
    <property type="component" value="Unassembled WGS sequence"/>
</dbReference>
<dbReference type="GO" id="GO:0016282">
    <property type="term" value="C:eukaryotic 43S preinitiation complex"/>
    <property type="evidence" value="ECO:0007669"/>
    <property type="project" value="UniProtKB-UniRule"/>
</dbReference>
<dbReference type="GO" id="GO:0033290">
    <property type="term" value="C:eukaryotic 48S preinitiation complex"/>
    <property type="evidence" value="ECO:0007669"/>
    <property type="project" value="UniProtKB-UniRule"/>
</dbReference>
<dbReference type="GO" id="GO:0005852">
    <property type="term" value="C:eukaryotic translation initiation factor 3 complex"/>
    <property type="evidence" value="ECO:0007669"/>
    <property type="project" value="UniProtKB-UniRule"/>
</dbReference>
<dbReference type="GO" id="GO:0008237">
    <property type="term" value="F:metallopeptidase activity"/>
    <property type="evidence" value="ECO:0007669"/>
    <property type="project" value="InterPro"/>
</dbReference>
<dbReference type="GO" id="GO:0003743">
    <property type="term" value="F:translation initiation factor activity"/>
    <property type="evidence" value="ECO:0007669"/>
    <property type="project" value="UniProtKB-UniRule"/>
</dbReference>
<dbReference type="GO" id="GO:0001732">
    <property type="term" value="P:formation of cytoplasmic translation initiation complex"/>
    <property type="evidence" value="ECO:0007669"/>
    <property type="project" value="UniProtKB-UniRule"/>
</dbReference>
<dbReference type="CDD" id="cd08065">
    <property type="entry name" value="MPN_eIF3h"/>
    <property type="match status" value="1"/>
</dbReference>
<dbReference type="FunFam" id="3.40.140.10:FF:000045">
    <property type="entry name" value="Eukaryotic translation initiation factor 3 subunit H"/>
    <property type="match status" value="1"/>
</dbReference>
<dbReference type="Gene3D" id="3.40.140.10">
    <property type="entry name" value="Cytidine Deaminase, domain 2"/>
    <property type="match status" value="1"/>
</dbReference>
<dbReference type="HAMAP" id="MF_03007">
    <property type="entry name" value="eIF3h"/>
    <property type="match status" value="1"/>
</dbReference>
<dbReference type="InterPro" id="IPR027524">
    <property type="entry name" value="eIF3h"/>
</dbReference>
<dbReference type="InterPro" id="IPR045810">
    <property type="entry name" value="eIF3h_C"/>
</dbReference>
<dbReference type="InterPro" id="IPR000555">
    <property type="entry name" value="JAMM/MPN+_dom"/>
</dbReference>
<dbReference type="InterPro" id="IPR050242">
    <property type="entry name" value="JAMM_MPN+_peptidase_M67A"/>
</dbReference>
<dbReference type="InterPro" id="IPR037518">
    <property type="entry name" value="MPN"/>
</dbReference>
<dbReference type="PANTHER" id="PTHR10410">
    <property type="entry name" value="EUKARYOTIC TRANSLATION INITIATION FACTOR 3 -RELATED"/>
    <property type="match status" value="1"/>
</dbReference>
<dbReference type="Pfam" id="PF19445">
    <property type="entry name" value="eIF3h_C"/>
    <property type="match status" value="1"/>
</dbReference>
<dbReference type="Pfam" id="PF01398">
    <property type="entry name" value="JAB"/>
    <property type="match status" value="1"/>
</dbReference>
<dbReference type="SMART" id="SM00232">
    <property type="entry name" value="JAB_MPN"/>
    <property type="match status" value="1"/>
</dbReference>
<dbReference type="PROSITE" id="PS50249">
    <property type="entry name" value="MPN"/>
    <property type="match status" value="1"/>
</dbReference>
<keyword id="KW-0963">Cytoplasm</keyword>
<keyword id="KW-0396">Initiation factor</keyword>
<keyword id="KW-0648">Protein biosynthesis</keyword>
<keyword id="KW-1185">Reference proteome</keyword>
<comment type="function">
    <text evidence="1">Component of the eukaryotic translation initiation factor 3 (eIF-3) complex, which is involved in protein synthesis of a specialized repertoire of mRNAs and, together with other initiation factors, stimulates binding of mRNA and methionyl-tRNAi to the 40S ribosome. The eIF-3 complex specifically targets and initiates translation of a subset of mRNAs involved in cell proliferation.</text>
</comment>
<comment type="subunit">
    <text evidence="1">Component of the eukaryotic translation initiation factor 3 (eIF-3) complex.</text>
</comment>
<comment type="subcellular location">
    <subcellularLocation>
        <location evidence="1">Cytoplasm</location>
    </subcellularLocation>
</comment>
<comment type="similarity">
    <text evidence="1">Belongs to the eIF-3 subunit H family.</text>
</comment>